<reference key="1">
    <citation type="journal article" date="1995" name="Science">
        <title>The minimal gene complement of Mycoplasma genitalium.</title>
        <authorList>
            <person name="Fraser C.M."/>
            <person name="Gocayne J.D."/>
            <person name="White O."/>
            <person name="Adams M.D."/>
            <person name="Clayton R.A."/>
            <person name="Fleischmann R.D."/>
            <person name="Bult C.J."/>
            <person name="Kerlavage A.R."/>
            <person name="Sutton G.G."/>
            <person name="Kelley J.M."/>
            <person name="Fritchman J.L."/>
            <person name="Weidman J.F."/>
            <person name="Small K.V."/>
            <person name="Sandusky M."/>
            <person name="Fuhrmann J.L."/>
            <person name="Nguyen D.T."/>
            <person name="Utterback T.R."/>
            <person name="Saudek D.M."/>
            <person name="Phillips C.A."/>
            <person name="Merrick J.M."/>
            <person name="Tomb J.-F."/>
            <person name="Dougherty B.A."/>
            <person name="Bott K.F."/>
            <person name="Hu P.-C."/>
            <person name="Lucier T.S."/>
            <person name="Peterson S.N."/>
            <person name="Smith H.O."/>
            <person name="Hutchison C.A. III"/>
            <person name="Venter J.C."/>
        </authorList>
    </citation>
    <scope>NUCLEOTIDE SEQUENCE [LARGE SCALE GENOMIC DNA]</scope>
    <source>
        <strain>ATCC 33530 / DSM 19775 / NCTC 10195 / G37</strain>
    </source>
</reference>
<reference key="2">
    <citation type="journal article" date="2006" name="Proc. Natl. Acad. Sci. U.S.A.">
        <title>Essential genes of a minimal bacterium.</title>
        <authorList>
            <person name="Glass J.I."/>
            <person name="Assad-Garcia N."/>
            <person name="Alperovich N."/>
            <person name="Yooseph S."/>
            <person name="Lewis M.R."/>
            <person name="Maruf M."/>
            <person name="Hutchison C.A. III"/>
            <person name="Smith H.O."/>
            <person name="Venter J.C."/>
        </authorList>
    </citation>
    <scope>SEQUENCE REVISION</scope>
    <scope>DISRUPTION PHENOTYPE</scope>
    <source>
        <strain>ATCC 33530 / DSM 19775 / NCTC 10195 / G37</strain>
    </source>
</reference>
<protein>
    <recommendedName>
        <fullName>Probable ABC transporter permease protein MG189</fullName>
    </recommendedName>
</protein>
<comment type="function">
    <text>Probably part of a binding-protein-dependent transport system. Probably responsible for the translocation of the substrate across the membrane.</text>
</comment>
<comment type="subcellular location">
    <subcellularLocation>
        <location evidence="3">Cell membrane</location>
        <topology evidence="1">Multi-pass membrane protein</topology>
    </subcellularLocation>
</comment>
<comment type="disruption phenotype">
    <text evidence="2">Probably essential, it was not disrupted in a global transposon mutagenesis study.</text>
</comment>
<comment type="similarity">
    <text evidence="3">Belongs to the binding-protein-dependent transport system permease family. MalFG subfamily.</text>
</comment>
<sequence>MFKNNLRFTSWINQHKFYQLDLSLKTRSIKQIVLTLVFKTLVLGFFGLIVIFPFYLMVVVSFASDERALDTRTPILWPDSWNFDNFSRVLSDGKYLNAIVVNTLVTVLSVLLTLFFTICMGYSFSLRKWKYKKLVWFFFLSVLILPESALLIGQYRIVIVANWNNPNSPLIVLGLIMPFVSSVFSGFMYRTSFEAIPSQLKESALIDGCNGFNYFLKIALPMVKSTSWTVGILTAFSAWNSYLWPLLLLGNRVDLNINLWVLQQGILDANSSDEQIRTLLNLKMSAAILAILPMFIIYFLFHKRIMNAIKNRANTIKG</sequence>
<organism>
    <name type="scientific">Mycoplasma genitalium (strain ATCC 33530 / DSM 19775 / NCTC 10195 / G37)</name>
    <name type="common">Mycoplasmoides genitalium</name>
    <dbReference type="NCBI Taxonomy" id="243273"/>
    <lineage>
        <taxon>Bacteria</taxon>
        <taxon>Bacillati</taxon>
        <taxon>Mycoplasmatota</taxon>
        <taxon>Mycoplasmoidales</taxon>
        <taxon>Mycoplasmoidaceae</taxon>
        <taxon>Mycoplasmoides</taxon>
    </lineage>
</organism>
<keyword id="KW-1003">Cell membrane</keyword>
<keyword id="KW-0472">Membrane</keyword>
<keyword id="KW-1185">Reference proteome</keyword>
<keyword id="KW-0812">Transmembrane</keyword>
<keyword id="KW-1133">Transmembrane helix</keyword>
<keyword id="KW-0813">Transport</keyword>
<proteinExistence type="inferred from homology"/>
<feature type="chain" id="PRO_0000060287" description="Probable ABC transporter permease protein MG189">
    <location>
        <begin position="1"/>
        <end position="318"/>
    </location>
</feature>
<feature type="transmembrane region" description="Helical" evidence="1">
    <location>
        <begin position="42"/>
        <end position="62"/>
    </location>
</feature>
<feature type="transmembrane region" description="Helical" evidence="1">
    <location>
        <begin position="98"/>
        <end position="118"/>
    </location>
</feature>
<feature type="transmembrane region" description="Helical" evidence="1">
    <location>
        <begin position="134"/>
        <end position="154"/>
    </location>
</feature>
<feature type="transmembrane region" description="Helical" evidence="1">
    <location>
        <begin position="169"/>
        <end position="189"/>
    </location>
</feature>
<feature type="transmembrane region" description="Helical" evidence="1">
    <location>
        <begin position="230"/>
        <end position="250"/>
    </location>
</feature>
<feature type="transmembrane region" description="Helical" evidence="1">
    <location>
        <begin position="282"/>
        <end position="302"/>
    </location>
</feature>
<feature type="domain" description="ABC transmembrane type-1" evidence="1">
    <location>
        <begin position="99"/>
        <end position="301"/>
    </location>
</feature>
<dbReference type="EMBL" id="L43967">
    <property type="protein sequence ID" value="AAC71408.2"/>
    <property type="molecule type" value="Genomic_DNA"/>
</dbReference>
<dbReference type="RefSeq" id="WP_009886003.1">
    <property type="nucleotide sequence ID" value="NC_000908.2"/>
</dbReference>
<dbReference type="SMR" id="P47435"/>
<dbReference type="FunCoup" id="P47435">
    <property type="interactions" value="39"/>
</dbReference>
<dbReference type="STRING" id="243273.MG_189"/>
<dbReference type="GeneID" id="88282321"/>
<dbReference type="KEGG" id="mge:MG_189"/>
<dbReference type="eggNOG" id="COG0395">
    <property type="taxonomic scope" value="Bacteria"/>
</dbReference>
<dbReference type="HOGENOM" id="CLU_016047_1_1_14"/>
<dbReference type="InParanoid" id="P47435"/>
<dbReference type="OrthoDB" id="9787837at2"/>
<dbReference type="BioCyc" id="MGEN243273:G1GJ2-217-MONOMER"/>
<dbReference type="Proteomes" id="UP000000807">
    <property type="component" value="Chromosome"/>
</dbReference>
<dbReference type="GO" id="GO:0005886">
    <property type="term" value="C:plasma membrane"/>
    <property type="evidence" value="ECO:0007669"/>
    <property type="project" value="UniProtKB-SubCell"/>
</dbReference>
<dbReference type="GO" id="GO:0055085">
    <property type="term" value="P:transmembrane transport"/>
    <property type="evidence" value="ECO:0007669"/>
    <property type="project" value="InterPro"/>
</dbReference>
<dbReference type="CDD" id="cd06261">
    <property type="entry name" value="TM_PBP2"/>
    <property type="match status" value="1"/>
</dbReference>
<dbReference type="Gene3D" id="1.10.3720.10">
    <property type="entry name" value="MetI-like"/>
    <property type="match status" value="1"/>
</dbReference>
<dbReference type="InterPro" id="IPR000515">
    <property type="entry name" value="MetI-like"/>
</dbReference>
<dbReference type="InterPro" id="IPR035906">
    <property type="entry name" value="MetI-like_sf"/>
</dbReference>
<dbReference type="PANTHER" id="PTHR43744:SF12">
    <property type="entry name" value="ABC TRANSPORTER PERMEASE PROTEIN MG189-RELATED"/>
    <property type="match status" value="1"/>
</dbReference>
<dbReference type="PANTHER" id="PTHR43744">
    <property type="entry name" value="ABC TRANSPORTER PERMEASE PROTEIN MG189-RELATED-RELATED"/>
    <property type="match status" value="1"/>
</dbReference>
<dbReference type="SUPFAM" id="SSF161098">
    <property type="entry name" value="MetI-like"/>
    <property type="match status" value="1"/>
</dbReference>
<dbReference type="PROSITE" id="PS50928">
    <property type="entry name" value="ABC_TM1"/>
    <property type="match status" value="1"/>
</dbReference>
<name>Y189_MYCGE</name>
<evidence type="ECO:0000255" key="1">
    <source>
        <dbReference type="PROSITE-ProRule" id="PRU00441"/>
    </source>
</evidence>
<evidence type="ECO:0000269" key="2">
    <source>
    </source>
</evidence>
<evidence type="ECO:0000305" key="3"/>
<accession>P47435</accession>
<gene>
    <name type="ordered locus">MG189</name>
</gene>